<reference key="1">
    <citation type="journal article" date="1995" name="Mol. Cell. Biol.">
        <title>The Saccharomyces cerevisiae MVP1 gene interacts with VPS1 and is required for vacuolar protein sorting.</title>
        <authorList>
            <person name="Ekena K."/>
            <person name="Stevens T.H."/>
        </authorList>
    </citation>
    <scope>NUCLEOTIDE SEQUENCE [GENOMIC DNA]</scope>
    <scope>FUNCTION</scope>
    <scope>INTERACTION WITH VPS1</scope>
    <scope>SUBCELLULAR LOCATION</scope>
</reference>
<reference key="2">
    <citation type="journal article" date="1997" name="Nature">
        <title>The nucleotide sequence of Saccharomyces cerevisiae chromosome XIII.</title>
        <authorList>
            <person name="Bowman S."/>
            <person name="Churcher C.M."/>
            <person name="Badcock K."/>
            <person name="Brown D."/>
            <person name="Chillingworth T."/>
            <person name="Connor R."/>
            <person name="Dedman K."/>
            <person name="Devlin K."/>
            <person name="Gentles S."/>
            <person name="Hamlin N."/>
            <person name="Hunt S."/>
            <person name="Jagels K."/>
            <person name="Lye G."/>
            <person name="Moule S."/>
            <person name="Odell C."/>
            <person name="Pearson D."/>
            <person name="Rajandream M.A."/>
            <person name="Rice P."/>
            <person name="Skelton J."/>
            <person name="Walsh S.V."/>
            <person name="Whitehead S."/>
            <person name="Barrell B.G."/>
        </authorList>
    </citation>
    <scope>NUCLEOTIDE SEQUENCE [LARGE SCALE GENOMIC DNA]</scope>
    <source>
        <strain>ATCC 204508 / S288c</strain>
    </source>
</reference>
<reference key="3">
    <citation type="journal article" date="2014" name="G3 (Bethesda)">
        <title>The reference genome sequence of Saccharomyces cerevisiae: Then and now.</title>
        <authorList>
            <person name="Engel S.R."/>
            <person name="Dietrich F.S."/>
            <person name="Fisk D.G."/>
            <person name="Binkley G."/>
            <person name="Balakrishnan R."/>
            <person name="Costanzo M.C."/>
            <person name="Dwight S.S."/>
            <person name="Hitz B.C."/>
            <person name="Karra K."/>
            <person name="Nash R.S."/>
            <person name="Weng S."/>
            <person name="Wong E.D."/>
            <person name="Lloyd P."/>
            <person name="Skrzypek M.S."/>
            <person name="Miyasato S.R."/>
            <person name="Simison M."/>
            <person name="Cherry J.M."/>
        </authorList>
    </citation>
    <scope>GENOME REANNOTATION</scope>
    <source>
        <strain>ATCC 204508 / S288c</strain>
    </source>
</reference>
<reference key="4">
    <citation type="journal article" date="2001" name="J. Biol. Chem.">
        <title>All phox homology (PX) domains from Saccharomyces cerevisiae specifically recognize phosphatidylinositol 3-phosphate.</title>
        <authorList>
            <person name="Yu J.W."/>
            <person name="Lemmon M.A."/>
        </authorList>
    </citation>
    <scope>DOMAIN</scope>
</reference>
<reference key="5">
    <citation type="journal article" date="2003" name="Nature">
        <title>Global analysis of protein expression in yeast.</title>
        <authorList>
            <person name="Ghaemmaghami S."/>
            <person name="Huh W.-K."/>
            <person name="Bower K."/>
            <person name="Howson R.W."/>
            <person name="Belle A."/>
            <person name="Dephoure N."/>
            <person name="O'Shea E.K."/>
            <person name="Weissman J.S."/>
        </authorList>
    </citation>
    <scope>LEVEL OF PROTEIN EXPRESSION [LARGE SCALE ANALYSIS]</scope>
</reference>
<reference key="6">
    <citation type="journal article" date="2008" name="Mol. Cell. Proteomics">
        <title>A multidimensional chromatography technology for in-depth phosphoproteome analysis.</title>
        <authorList>
            <person name="Albuquerque C.P."/>
            <person name="Smolka M.B."/>
            <person name="Payne S.H."/>
            <person name="Bafna V."/>
            <person name="Eng J."/>
            <person name="Zhou H."/>
        </authorList>
    </citation>
    <scope>IDENTIFICATION BY MASS SPECTROMETRY [LARGE SCALE ANALYSIS]</scope>
</reference>
<reference key="7">
    <citation type="journal article" date="2009" name="Science">
        <title>Global analysis of Cdk1 substrate phosphorylation sites provides insights into evolution.</title>
        <authorList>
            <person name="Holt L.J."/>
            <person name="Tuch B.B."/>
            <person name="Villen J."/>
            <person name="Johnson A.D."/>
            <person name="Gygi S.P."/>
            <person name="Morgan D.O."/>
        </authorList>
    </citation>
    <scope>IDENTIFICATION BY MASS SPECTROMETRY [LARGE SCALE ANALYSIS]</scope>
</reference>
<reference key="8">
    <citation type="journal article" date="2014" name="J. Cell Biol.">
        <title>Fission of SNX-BAR-coated endosomal retrograde transport carriers is promoted by the dynamin-related protein Vps1.</title>
        <authorList>
            <person name="Chi R.J."/>
            <person name="Liu J."/>
            <person name="West M."/>
            <person name="Wang J."/>
            <person name="Odorizzi G."/>
            <person name="Burd C.G."/>
        </authorList>
    </citation>
    <scope>FUNCTION</scope>
    <scope>SUBCELLULAR LOCATION</scope>
    <scope>MUTAGENESIS OF ARG-172</scope>
    <scope>DISRUPTION PHENOTYPE</scope>
</reference>
<reference key="9">
    <citation type="journal article" date="2017" name="Traffic">
        <title>Cargo selectivity of yeast sorting nexins.</title>
        <authorList>
            <person name="Bean B.D."/>
            <person name="Davey M."/>
            <person name="Conibear E."/>
        </authorList>
    </citation>
    <scope>FUNCTION</scope>
</reference>
<reference evidence="11" key="10">
    <citation type="journal article" date="2020" name="Nat. Commun.">
        <title>The cryo-EM structure of the SNX-BAR Mvp1 tetramer.</title>
        <authorList>
            <person name="Sun D."/>
            <person name="Varlakhanova N.V."/>
            <person name="Tornabene B.A."/>
            <person name="Ramachandran R."/>
            <person name="Zhang P."/>
            <person name="Ford M.G.J."/>
        </authorList>
    </citation>
    <scope>STRUCTURE BY ELECTRON MICROSCOPY (4.20 ANGSTROMS)</scope>
    <scope>SUBUNIT</scope>
</reference>
<name>MVP1_YEAST</name>
<evidence type="ECO:0000250" key="1"/>
<evidence type="ECO:0000255" key="2">
    <source>
        <dbReference type="PROSITE-ProRule" id="PRU00147"/>
    </source>
</evidence>
<evidence type="ECO:0000256" key="3">
    <source>
        <dbReference type="SAM" id="MobiDB-lite"/>
    </source>
</evidence>
<evidence type="ECO:0000269" key="4">
    <source>
    </source>
</evidence>
<evidence type="ECO:0000269" key="5">
    <source>
    </source>
</evidence>
<evidence type="ECO:0000269" key="6">
    <source>
    </source>
</evidence>
<evidence type="ECO:0000269" key="7">
    <source>
    </source>
</evidence>
<evidence type="ECO:0000269" key="8">
    <source>
    </source>
</evidence>
<evidence type="ECO:0000269" key="9">
    <source>
    </source>
</evidence>
<evidence type="ECO:0000305" key="10"/>
<evidence type="ECO:0007744" key="11">
    <source>
        <dbReference type="PDB" id="6Q0X"/>
    </source>
</evidence>
<feature type="chain" id="PRO_0000213802" description="Sorting nexin MVP1">
    <location>
        <begin position="1"/>
        <end position="511"/>
    </location>
</feature>
<feature type="domain" description="PX" evidence="2">
    <location>
        <begin position="128"/>
        <end position="247"/>
    </location>
</feature>
<feature type="region of interest" description="Disordered" evidence="3">
    <location>
        <begin position="1"/>
        <end position="36"/>
    </location>
</feature>
<feature type="compositionally biased region" description="Polar residues" evidence="3">
    <location>
        <begin position="25"/>
        <end position="36"/>
    </location>
</feature>
<feature type="binding site" evidence="1">
    <location>
        <position position="172"/>
    </location>
    <ligand>
        <name>a 1,2-diacyl-sn-glycero-3-phospho-(1D-myo-inositol-3-phosphate)</name>
        <dbReference type="ChEBI" id="CHEBI:58088"/>
    </ligand>
</feature>
<feature type="binding site" evidence="1">
    <location>
        <position position="174"/>
    </location>
    <ligand>
        <name>a 1,2-diacyl-sn-glycero-3-phospho-(1D-myo-inositol-3-phosphate)</name>
        <dbReference type="ChEBI" id="CHEBI:58088"/>
    </ligand>
</feature>
<feature type="binding site" evidence="1">
    <location>
        <position position="198"/>
    </location>
    <ligand>
        <name>a 1,2-diacyl-sn-glycero-3-phospho-(1D-myo-inositol-3-phosphate)</name>
        <dbReference type="ChEBI" id="CHEBI:58088"/>
    </ligand>
</feature>
<feature type="binding site" evidence="1">
    <location>
        <position position="213"/>
    </location>
    <ligand>
        <name>a 1,2-diacyl-sn-glycero-3-phospho-(1D-myo-inositol-3-phosphate)</name>
        <dbReference type="ChEBI" id="CHEBI:58088"/>
    </ligand>
</feature>
<feature type="mutagenesis site" description="Disprupts localization to endosomal system." evidence="6">
    <original>R</original>
    <variation>A</variation>
    <location>
        <position position="172"/>
    </location>
</feature>
<feature type="sequence conflict" description="In Ref. 1; AAA67884." evidence="10" ref="1">
    <original>Q</original>
    <variation>N</variation>
    <location>
        <position position="85"/>
    </location>
</feature>
<comment type="function">
    <text evidence="6 7 9">Required for vacuolar protein sorting (PubMed:7862158). Component of the retromer-mediated endosome-to-Golgi retrograde pathway (PubMed:24567361, PubMed:27883263). Required for efficient cargo export from the endosome, promoting VPS1-mediated fission of retromer-coated tubules that bud from the endosome (PubMed:24567361).</text>
</comment>
<comment type="subunit">
    <text evidence="8 9">Homodimer. Forms an autoinhibited tetramer consisting of 2 homodimers that self-interact, wherein the membrane-interacting BAR surfaces are sequestered and the PX lipid-binding sites are occluded (PubMed:32198400). Interacts with VPS1 (PubMed:7862158).</text>
</comment>
<comment type="interaction">
    <interactant intactId="EBI-11636">
        <id>P40959</id>
    </interactant>
    <interactant intactId="EBI-11636">
        <id>P40959</id>
        <label>MVP1</label>
    </interactant>
    <organismsDiffer>false</organismsDiffer>
    <experiments>3</experiments>
</comment>
<comment type="subcellular location">
    <subcellularLocation>
        <location evidence="9">Cytoplasm</location>
    </subcellularLocation>
    <subcellularLocation>
        <location evidence="6">Endosome membrane</location>
        <topology evidence="6">Peripheral membrane protein</topology>
        <orientation evidence="6">Cytoplasmic side</orientation>
    </subcellularLocation>
    <text evidence="6">Localizes throughout the endosomal system binding to phosphatidylinositol 3-phosphate (PtdIns3P). Enriched on retromer SNX-BAR-decorated endosomes.</text>
</comment>
<comment type="domain">
    <text evidence="4">The PX domain binds phosphatidylinositol 3-phosphate, which is necessary for peripheral membrane localization.</text>
</comment>
<comment type="disruption phenotype">
    <text evidence="6">Fails in retromer-mediated sorting of VPS10.</text>
</comment>
<comment type="miscellaneous">
    <text evidence="5">Present with 2210 molecules/cell in log phase SD medium.</text>
</comment>
<comment type="similarity">
    <text evidence="10">Belongs to the sorting nexin family.</text>
</comment>
<dbReference type="EMBL" id="U16137">
    <property type="protein sequence ID" value="AAA67884.1"/>
    <property type="molecule type" value="Genomic_DNA"/>
</dbReference>
<dbReference type="EMBL" id="Z48613">
    <property type="protein sequence ID" value="CAA88519.1"/>
    <property type="molecule type" value="Genomic_DNA"/>
</dbReference>
<dbReference type="EMBL" id="BK006946">
    <property type="protein sequence ID" value="DAA09903.1"/>
    <property type="molecule type" value="Genomic_DNA"/>
</dbReference>
<dbReference type="PIR" id="S53033">
    <property type="entry name" value="S53033"/>
</dbReference>
<dbReference type="RefSeq" id="NP_013717.1">
    <property type="nucleotide sequence ID" value="NM_001182500.1"/>
</dbReference>
<dbReference type="PDB" id="6Q0X">
    <property type="method" value="EM"/>
    <property type="resolution" value="4.20 A"/>
    <property type="chains" value="A/B/C/D=1-511"/>
</dbReference>
<dbReference type="PDBsum" id="6Q0X"/>
<dbReference type="EMDB" id="EMD-20555"/>
<dbReference type="SMR" id="P40959"/>
<dbReference type="BioGRID" id="35174">
    <property type="interactions" value="194"/>
</dbReference>
<dbReference type="DIP" id="DIP-1764N"/>
<dbReference type="FunCoup" id="P40959">
    <property type="interactions" value="195"/>
</dbReference>
<dbReference type="IntAct" id="P40959">
    <property type="interactions" value="14"/>
</dbReference>
<dbReference type="MINT" id="P40959"/>
<dbReference type="STRING" id="4932.YMR004W"/>
<dbReference type="iPTMnet" id="P40959"/>
<dbReference type="PaxDb" id="4932-YMR004W"/>
<dbReference type="PeptideAtlas" id="P40959"/>
<dbReference type="EnsemblFungi" id="YMR004W_mRNA">
    <property type="protein sequence ID" value="YMR004W"/>
    <property type="gene ID" value="YMR004W"/>
</dbReference>
<dbReference type="GeneID" id="855016"/>
<dbReference type="KEGG" id="sce:YMR004W"/>
<dbReference type="AGR" id="SGD:S000004606"/>
<dbReference type="SGD" id="S000004606">
    <property type="gene designation" value="MVP1"/>
</dbReference>
<dbReference type="VEuPathDB" id="FungiDB:YMR004W"/>
<dbReference type="eggNOG" id="KOG2273">
    <property type="taxonomic scope" value="Eukaryota"/>
</dbReference>
<dbReference type="HOGENOM" id="CLU_009058_2_0_1"/>
<dbReference type="InParanoid" id="P40959"/>
<dbReference type="OMA" id="WEYAGAK"/>
<dbReference type="OrthoDB" id="10064318at2759"/>
<dbReference type="BioCyc" id="YEAST:G3O-32715-MONOMER"/>
<dbReference type="BioGRID-ORCS" id="855016">
    <property type="hits" value="0 hits in 10 CRISPR screens"/>
</dbReference>
<dbReference type="PRO" id="PR:P40959"/>
<dbReference type="Proteomes" id="UP000002311">
    <property type="component" value="Chromosome XIII"/>
</dbReference>
<dbReference type="RNAct" id="P40959">
    <property type="molecule type" value="protein"/>
</dbReference>
<dbReference type="GO" id="GO:0005737">
    <property type="term" value="C:cytoplasm"/>
    <property type="evidence" value="ECO:0000314"/>
    <property type="project" value="SGD"/>
</dbReference>
<dbReference type="GO" id="GO:0005829">
    <property type="term" value="C:cytosol"/>
    <property type="evidence" value="ECO:0007669"/>
    <property type="project" value="GOC"/>
</dbReference>
<dbReference type="GO" id="GO:0005768">
    <property type="term" value="C:endosome"/>
    <property type="evidence" value="ECO:0000314"/>
    <property type="project" value="SGD"/>
</dbReference>
<dbReference type="GO" id="GO:0010008">
    <property type="term" value="C:endosome membrane"/>
    <property type="evidence" value="ECO:0007669"/>
    <property type="project" value="UniProtKB-SubCell"/>
</dbReference>
<dbReference type="GO" id="GO:0005634">
    <property type="term" value="C:nucleus"/>
    <property type="evidence" value="ECO:0000314"/>
    <property type="project" value="SGD"/>
</dbReference>
<dbReference type="GO" id="GO:0042802">
    <property type="term" value="F:identical protein binding"/>
    <property type="evidence" value="ECO:0000353"/>
    <property type="project" value="IntAct"/>
</dbReference>
<dbReference type="GO" id="GO:0032266">
    <property type="term" value="F:phosphatidylinositol-3-phosphate binding"/>
    <property type="evidence" value="ECO:0000314"/>
    <property type="project" value="SGD"/>
</dbReference>
<dbReference type="GO" id="GO:0097320">
    <property type="term" value="P:plasma membrane tubulation"/>
    <property type="evidence" value="ECO:0000314"/>
    <property type="project" value="SGD"/>
</dbReference>
<dbReference type="GO" id="GO:0006623">
    <property type="term" value="P:protein targeting to vacuole"/>
    <property type="evidence" value="ECO:0000315"/>
    <property type="project" value="SGD"/>
</dbReference>
<dbReference type="GO" id="GO:0042147">
    <property type="term" value="P:retrograde transport, endosome to Golgi"/>
    <property type="evidence" value="ECO:0000315"/>
    <property type="project" value="SGD"/>
</dbReference>
<dbReference type="CDD" id="cd07597">
    <property type="entry name" value="BAR_SNX8"/>
    <property type="match status" value="1"/>
</dbReference>
<dbReference type="CDD" id="cd06866">
    <property type="entry name" value="PX_SNX8_Mvp1p_like"/>
    <property type="match status" value="1"/>
</dbReference>
<dbReference type="FunFam" id="3.30.1520.10:FF:000042">
    <property type="entry name" value="Sorting nexin mvp1"/>
    <property type="match status" value="1"/>
</dbReference>
<dbReference type="Gene3D" id="3.30.1520.10">
    <property type="entry name" value="Phox-like domain"/>
    <property type="match status" value="1"/>
</dbReference>
<dbReference type="InterPro" id="IPR001683">
    <property type="entry name" value="PX_dom"/>
</dbReference>
<dbReference type="InterPro" id="IPR036871">
    <property type="entry name" value="PX_dom_sf"/>
</dbReference>
<dbReference type="InterPro" id="IPR028662">
    <property type="entry name" value="SNX8/Mvp1"/>
</dbReference>
<dbReference type="InterPro" id="IPR035704">
    <property type="entry name" value="SNX8/Mvp1_PX"/>
</dbReference>
<dbReference type="InterPro" id="IPR045734">
    <property type="entry name" value="Snx8_BAR_dom"/>
</dbReference>
<dbReference type="PANTHER" id="PTHR47554">
    <property type="entry name" value="SORTING NEXIN MVP1"/>
    <property type="match status" value="1"/>
</dbReference>
<dbReference type="PANTHER" id="PTHR47554:SF1">
    <property type="entry name" value="SORTING NEXIN MVP1"/>
    <property type="match status" value="1"/>
</dbReference>
<dbReference type="Pfam" id="PF00787">
    <property type="entry name" value="PX"/>
    <property type="match status" value="1"/>
</dbReference>
<dbReference type="Pfam" id="PF19566">
    <property type="entry name" value="Snx8_BAR_dom"/>
    <property type="match status" value="1"/>
</dbReference>
<dbReference type="SMART" id="SM00312">
    <property type="entry name" value="PX"/>
    <property type="match status" value="1"/>
</dbReference>
<dbReference type="SUPFAM" id="SSF64268">
    <property type="entry name" value="PX domain"/>
    <property type="match status" value="1"/>
</dbReference>
<dbReference type="PROSITE" id="PS50195">
    <property type="entry name" value="PX"/>
    <property type="match status" value="1"/>
</dbReference>
<organism>
    <name type="scientific">Saccharomyces cerevisiae (strain ATCC 204508 / S288c)</name>
    <name type="common">Baker's yeast</name>
    <dbReference type="NCBI Taxonomy" id="559292"/>
    <lineage>
        <taxon>Eukaryota</taxon>
        <taxon>Fungi</taxon>
        <taxon>Dikarya</taxon>
        <taxon>Ascomycota</taxon>
        <taxon>Saccharomycotina</taxon>
        <taxon>Saccharomycetes</taxon>
        <taxon>Saccharomycetales</taxon>
        <taxon>Saccharomycetaceae</taxon>
        <taxon>Saccharomyces</taxon>
    </lineage>
</organism>
<keyword id="KW-0002">3D-structure</keyword>
<keyword id="KW-0963">Cytoplasm</keyword>
<keyword id="KW-0967">Endosome</keyword>
<keyword id="KW-0472">Membrane</keyword>
<keyword id="KW-0653">Protein transport</keyword>
<keyword id="KW-1185">Reference proteome</keyword>
<keyword id="KW-0813">Transport</keyword>
<sequence>MDNYEGSDPWNTSSNAWTKDDDHVVSTTNSEPSLNGISGEFNTLNFSTPLDTNEEDTGFLPTNDVLEESIWDDSRNPLGATGMSQTPNIAANETVIDKNDARDQNIEESEADLLDWTNNVRKTYRPLDADIIIIEEIPEREGLLFKHANYLVKHLIALPSTSPSEERTVVRRYSDFLWLREILLKRYPFRMIPELPPKRIGSQNADQLFLKKRRIGLSRFINLVMKHPKLSNDDLVLTFLTVRTDLTSWRKQATYDTSNEFADKKISQEFMKMWKKEFAEQWNQAASCIDTSMELWYRITLLLERHEKRIMQMVHERNFFETLVDNFSEVTPKLYPVQQNDTILDINNNLSIIKKHLETTSSICKQETEEISGTLSPKFKIFTDILLSLRSLFERYKIMAANNVVELQRHVELNKEKLESMKGKPDVSGAEYDRIKKIIQKDRRSIIEQSNRAWLIRQCILEEFTIFQETQFLITRAFQDWAKLNSNHAGLKLNEWEKLVTSIMDMPISRE</sequence>
<protein>
    <recommendedName>
        <fullName>Sorting nexin MVP1</fullName>
    </recommendedName>
</protein>
<proteinExistence type="evidence at protein level"/>
<gene>
    <name type="primary">MVP1</name>
    <name type="ordered locus">YMR004W</name>
    <name type="ORF">YM8270.06</name>
</gene>
<accession>P40959</accession>
<accession>D6VZH9</accession>